<protein>
    <recommendedName>
        <fullName evidence="5 6">Delta-conotoxin-like CnVID</fullName>
        <shortName evidence="5 6">Delta-CnVID</shortName>
    </recommendedName>
</protein>
<comment type="function">
    <text evidence="3">Delta-conotoxins bind to site 6 of voltage-gated sodium channels (Nav) and inhibit the inactivation process. This toxin acts on Nav1.2/SCN2A, Nav1.3/SCN3A and Nav1.6/SCN8A (EC(50)=1.7 uM).</text>
</comment>
<comment type="subcellular location">
    <subcellularLocation>
        <location evidence="2">Secreted</location>
    </subcellularLocation>
</comment>
<comment type="tissue specificity">
    <text evidence="8">Expressed by the venom duct.</text>
</comment>
<comment type="domain">
    <text evidence="1">The presence of a 'disulfide through disulfide knot' structurally defines this protein as a knottin.</text>
</comment>
<comment type="domain">
    <text evidence="7">The cysteine framework is VI/VII (C-C-CC-C-C).</text>
</comment>
<comment type="mass spectrometry">
    <text>Monoisotopic mass.</text>
</comment>
<comment type="mass spectrometry">
    <text>Monoisotopic mass.</text>
</comment>
<comment type="miscellaneous">
    <text evidence="8">Found in the dissected venom (DV), but not in the injectable (milked) venom (IV).</text>
</comment>
<comment type="miscellaneous">
    <text evidence="3">Negative results: does not have activity on rNav1.4/SCN4A, hNav1.5/SCN5A, Nav1.7/SCN9A, rNav1.8/SCN10A, DmNav1/para, Kv1.1/KCNA1, Kv1.3/KCNA3, Kv1.4/KCNA4, Kv1.5/KCNA5, Kv11.1/ERG1/HERG and shaker.</text>
</comment>
<comment type="similarity">
    <text evidence="7">Belongs to the conotoxin O1 superfamily.</text>
</comment>
<keyword id="KW-0903">Direct protein sequencing</keyword>
<keyword id="KW-1015">Disulfide bond</keyword>
<keyword id="KW-0379">Hydroxylation</keyword>
<keyword id="KW-0872">Ion channel impairing toxin</keyword>
<keyword id="KW-0960">Knottin</keyword>
<keyword id="KW-0528">Neurotoxin</keyword>
<keyword id="KW-0638">Presynaptic neurotoxin</keyword>
<keyword id="KW-0964">Secreted</keyword>
<keyword id="KW-0800">Toxin</keyword>
<keyword id="KW-0738">Voltage-gated sodium channel impairing toxin</keyword>
<dbReference type="SMR" id="P0CC15"/>
<dbReference type="GO" id="GO:0005576">
    <property type="term" value="C:extracellular region"/>
    <property type="evidence" value="ECO:0007669"/>
    <property type="project" value="UniProtKB-SubCell"/>
</dbReference>
<dbReference type="GO" id="GO:0044231">
    <property type="term" value="C:host cell presynaptic membrane"/>
    <property type="evidence" value="ECO:0007669"/>
    <property type="project" value="UniProtKB-KW"/>
</dbReference>
<dbReference type="GO" id="GO:0017080">
    <property type="term" value="F:sodium channel regulator activity"/>
    <property type="evidence" value="ECO:0007669"/>
    <property type="project" value="UniProtKB-KW"/>
</dbReference>
<dbReference type="GO" id="GO:0090729">
    <property type="term" value="F:toxin activity"/>
    <property type="evidence" value="ECO:0007669"/>
    <property type="project" value="UniProtKB-KW"/>
</dbReference>
<name>O16D_CONCN</name>
<organism>
    <name type="scientific">Conus consors</name>
    <name type="common">Singed cone</name>
    <dbReference type="NCBI Taxonomy" id="101297"/>
    <lineage>
        <taxon>Eukaryota</taxon>
        <taxon>Metazoa</taxon>
        <taxon>Spiralia</taxon>
        <taxon>Lophotrochozoa</taxon>
        <taxon>Mollusca</taxon>
        <taxon>Gastropoda</taxon>
        <taxon>Caenogastropoda</taxon>
        <taxon>Neogastropoda</taxon>
        <taxon>Conoidea</taxon>
        <taxon>Conidae</taxon>
        <taxon>Conus</taxon>
        <taxon>Pionoconus</taxon>
    </lineage>
</organism>
<feature type="peptide" id="PRO_0000390925" description="Delta-conotoxin-like CnVID">
    <location>
        <begin position="1"/>
        <end position="32"/>
    </location>
</feature>
<feature type="modified residue" description="4-hydroxyproline" evidence="4">
    <location>
        <position position="6"/>
    </location>
</feature>
<feature type="modified residue" description="4-hydroxyproline" evidence="4">
    <location>
        <position position="14"/>
    </location>
</feature>
<feature type="disulfide bond" evidence="3">
    <location>
        <begin position="3"/>
        <end position="18"/>
    </location>
</feature>
<feature type="disulfide bond" evidence="3">
    <location>
        <begin position="10"/>
        <end position="22"/>
    </location>
</feature>
<feature type="disulfide bond" evidence="3">
    <location>
        <begin position="17"/>
        <end position="27"/>
    </location>
</feature>
<sequence>DECFSPGTFCGFKPGLCCSARCFSLFCISLEF</sequence>
<accession>P0CC15</accession>
<reference key="1">
    <citation type="thesis" date="1999" institute="University of La Rochelle" country="France">
        <title>Physico-chemical and pharmacological study of new toxins from the piscivorous cone snail Conus consors.</title>
        <authorList>
            <person name="Favreau P."/>
        </authorList>
    </citation>
    <scope>PROTEIN SEQUENCE</scope>
    <scope>HYDROXYLATION AT PRO-6 AND PRO-14</scope>
    <scope>IDENTIFICATION BY MASS SPECTROMETRY</scope>
    <source>
        <tissue>Venom</tissue>
    </source>
</reference>
<reference key="2">
    <citation type="unpublished observations" date="2011-05">
        <authorList>
            <person name="Biass D."/>
            <person name="Favreau P."/>
        </authorList>
    </citation>
    <scope>SEQUENCE REVISION TO 25</scope>
</reference>
<reference key="3">
    <citation type="journal article" date="2014" name="J. Biol. Chem.">
        <title>Delta-conotoxins synthesized using an acid-cleavable solubility tag approach reveal key structural determinants for NaV subtype selectivity.</title>
        <authorList>
            <person name="Peigneur S."/>
            <person name="Paolini-Bertrand M."/>
            <person name="Gaertner H."/>
            <person name="Biass D."/>
            <person name="Violette A."/>
            <person name="Stoecklin R."/>
            <person name="Favreau P."/>
            <person name="Tytgat J."/>
            <person name="Hartley O."/>
        </authorList>
    </citation>
    <scope>PROTEIN SEQUENCE</scope>
    <scope>SYNTHESIS</scope>
    <scope>FUNCTION</scope>
    <scope>MASS SPECTROMETRY</scope>
    <scope>DISULFIDE BOND</scope>
    <source>
        <tissue>Venom</tissue>
    </source>
</reference>
<reference key="4">
    <citation type="journal article" date="2009" name="J. Proteomics">
        <title>Comparative proteomic study of the venom of the piscivorous cone snail Conus consors.</title>
        <authorList>
            <person name="Biass D."/>
            <person name="Dutertre S."/>
            <person name="Gerbault A."/>
            <person name="Menou J.L."/>
            <person name="Offord R."/>
            <person name="Favreau P."/>
            <person name="Stocklin R."/>
        </authorList>
    </citation>
    <scope>MASS SPECTROMETRY</scope>
    <scope>SUBCELLULAR LOCATION</scope>
    <source>
        <tissue>Venom</tissue>
    </source>
</reference>
<proteinExistence type="evidence at protein level"/>
<evidence type="ECO:0000250" key="1"/>
<evidence type="ECO:0000269" key="2">
    <source>
    </source>
</evidence>
<evidence type="ECO:0000269" key="3">
    <source>
    </source>
</evidence>
<evidence type="ECO:0000269" key="4">
    <source ref="1"/>
</evidence>
<evidence type="ECO:0000303" key="5">
    <source>
    </source>
</evidence>
<evidence type="ECO:0000303" key="6">
    <source>
    </source>
</evidence>
<evidence type="ECO:0000305" key="7"/>
<evidence type="ECO:0000305" key="8">
    <source>
    </source>
</evidence>